<accession>O46588</accession>
<keyword id="KW-0007">Acetylation</keyword>
<keyword id="KW-0472">Membrane</keyword>
<keyword id="KW-0496">Mitochondrion</keyword>
<keyword id="KW-0999">Mitochondrion inner membrane</keyword>
<keyword id="KW-0597">Phosphoprotein</keyword>
<keyword id="KW-0812">Transmembrane</keyword>
<keyword id="KW-1133">Transmembrane helix</keyword>
<comment type="function">
    <text evidence="2">Component of the cytochrome c oxidase, the last enzyme in the mitochondrial electron transport chain which drives oxidative phosphorylation. The respiratory chain contains 3 multisubunit complexes succinate dehydrogenase (complex II, CII), ubiquinol-cytochrome c oxidoreductase (cytochrome b-c1 complex, complex III, CIII) and cytochrome c oxidase (complex IV, CIV), that cooperate to transfer electrons derived from NADH and succinate to molecular oxygen, creating an electrochemical gradient over the inner membrane that drives transmembrane transport and the ATP synthase. Cytochrome c oxidase is the component of the respiratory chain that catalyzes the reduction of oxygen to water. Electrons originating from reduced cytochrome c in the intermembrane space (IMS) are transferred via the dinuclear copper A center (CU(A)) of subunit 2 and heme A of subunit 1 to the active site in subunit 1, a binuclear center (BNC) formed by heme A3 and copper B (CU(B)). The BNC reduces molecular oxygen to 2 water molecules using 4 electrons from cytochrome c in the IMS and 4 protons from the mitochondrial matrix.</text>
</comment>
<comment type="pathway">
    <text evidence="2">Energy metabolism; oxidative phosphorylation.</text>
</comment>
<comment type="subunit">
    <text evidence="1 3 4 5">Component of the cytochrome c oxidase (complex IV, CIV), a multisubunit enzyme composed of 14 subunits. The complex is composed of a catalytic core of 3 subunits MT-CO1, MT-CO2 and MT-CO3, encoded in the mitochondrial DNA, and 11 supernumerary subunits COX4I, COX5A, COX5B, COX6A, COX6B, COX6C, COX7A, COX7B, COX7C, COX8 and NDUFA4, which are encoded in the nuclear genome. The complex exists as a monomer or a dimer and forms supercomplexes (SCs) in the inner mitochondrial membrane with NADH-ubiquinone oxidoreductase (complex I, CI) and ubiquinol-cytochrome c oxidoreductase (cytochrome b-c1 complex, complex III, CIII), resulting in different assemblies (supercomplex SCI(1)III(2)IV(1) and megacomplex MCI(2)III(2)IV(2)) (By similarity). Interacts with PHB2; the interaction decreases in absence of SPHK2 (By similarity). Interacts with AFG1L (By similarity). Interacts with ABCB7; this interaction allows the regulation of cellular iron homeostasis and cellular reactive oxygen species (ROS) levels in cardiomyocytes (By similarity). Interacts with FLVCR2; this interaction occurs in the absence of heme and is disrupted upon heme binding. Interacts with IRGC (By similarity).</text>
</comment>
<comment type="subcellular location">
    <subcellularLocation>
        <location evidence="1">Mitochondrion inner membrane</location>
        <topology evidence="1">Single-pass membrane protein</topology>
    </subcellularLocation>
</comment>
<comment type="similarity">
    <text evidence="6">Belongs to the cytochrome c oxidase IV family.</text>
</comment>
<reference key="1">
    <citation type="journal article" date="1997" name="J. Mol. Evol.">
        <title>Molecular evolution of cytochrome c oxidase subunit IV: evidence for positive selection in simian primates.</title>
        <authorList>
            <person name="Wu W."/>
            <person name="Goodman M."/>
            <person name="Lomax M.I."/>
            <person name="Grossman L.I."/>
        </authorList>
    </citation>
    <scope>NUCLEOTIDE SEQUENCE [GENOMIC DNA]</scope>
</reference>
<sequence>SVVKREDFSLPAYVDRRDYPLPDVAHVKHLSASQKALKEKEKASWSSLSMDEKVELYRIKFKETFAEMNRGSNEWKTVVGTATFFIGFTALIIMWQKRY</sequence>
<dbReference type="EMBL" id="AH005835">
    <property type="protein sequence ID" value="AAB97757.1"/>
    <property type="molecule type" value="Genomic_DNA"/>
</dbReference>
<dbReference type="SMR" id="O46588"/>
<dbReference type="UniPathway" id="UPA00705"/>
<dbReference type="GO" id="GO:0005743">
    <property type="term" value="C:mitochondrial inner membrane"/>
    <property type="evidence" value="ECO:0000250"/>
    <property type="project" value="UniProtKB"/>
</dbReference>
<dbReference type="GO" id="GO:0045277">
    <property type="term" value="C:respiratory chain complex IV"/>
    <property type="evidence" value="ECO:0007669"/>
    <property type="project" value="InterPro"/>
</dbReference>
<dbReference type="GO" id="GO:0006123">
    <property type="term" value="P:mitochondrial electron transport, cytochrome c to oxygen"/>
    <property type="evidence" value="ECO:0007669"/>
    <property type="project" value="InterPro"/>
</dbReference>
<dbReference type="CDD" id="cd00922">
    <property type="entry name" value="Cyt_c_Oxidase_IV"/>
    <property type="match status" value="1"/>
</dbReference>
<dbReference type="FunFam" id="1.10.442.10:FF:000003">
    <property type="entry name" value="Cytochrome c oxidase subunit 4 isoform 1, mitochondrial"/>
    <property type="match status" value="1"/>
</dbReference>
<dbReference type="Gene3D" id="1.10.442.10">
    <property type="entry name" value="Cytochrome c oxidase subunit IV"/>
    <property type="match status" value="1"/>
</dbReference>
<dbReference type="InterPro" id="IPR013288">
    <property type="entry name" value="Cyt_c_oxidase_su4"/>
</dbReference>
<dbReference type="InterPro" id="IPR004203">
    <property type="entry name" value="Cyt_c_oxidase_su4_fam"/>
</dbReference>
<dbReference type="InterPro" id="IPR036639">
    <property type="entry name" value="Cyt_c_oxidase_su4_sf"/>
</dbReference>
<dbReference type="PANTHER" id="PTHR10707:SF12">
    <property type="entry name" value="CYTOCHROME C OXIDASE SUBUNIT 4 ISOFORM 1, MITOCHONDRIAL"/>
    <property type="match status" value="1"/>
</dbReference>
<dbReference type="PANTHER" id="PTHR10707">
    <property type="entry name" value="CYTOCHROME C OXIDASE SUBUNIT IV"/>
    <property type="match status" value="1"/>
</dbReference>
<dbReference type="Pfam" id="PF02936">
    <property type="entry name" value="COX4"/>
    <property type="match status" value="1"/>
</dbReference>
<dbReference type="PRINTS" id="PR01873">
    <property type="entry name" value="CYTCOXIDASE4"/>
</dbReference>
<dbReference type="SUPFAM" id="SSF81406">
    <property type="entry name" value="Mitochondrial cytochrome c oxidase subunit IV"/>
    <property type="match status" value="1"/>
</dbReference>
<feature type="chain" id="PRO_0000194081" description="Cytochrome c oxidase subunit 4 isoform 1, mitochondrial">
    <location>
        <begin position="1" status="less than"/>
        <end position="99" status="greater than"/>
    </location>
</feature>
<feature type="topological domain" description="Mitochondrial matrix" evidence="1">
    <location>
        <begin position="1" status="less than"/>
        <end position="73"/>
    </location>
</feature>
<feature type="transmembrane region" description="Helical" evidence="1">
    <location>
        <begin position="74"/>
        <end position="99"/>
    </location>
</feature>
<feature type="modified residue" description="N6-acetyllysine; alternate" evidence="5">
    <location>
        <position position="4"/>
    </location>
</feature>
<feature type="modified residue" description="N6-succinyllysine; alternate" evidence="5">
    <location>
        <position position="4"/>
    </location>
</feature>
<feature type="modified residue" description="N6-acetyllysine" evidence="4">
    <location>
        <position position="28"/>
    </location>
</feature>
<feature type="modified residue" description="Phosphoserine" evidence="3">
    <location>
        <position position="31"/>
    </location>
</feature>
<feature type="modified residue" description="Phosphoserine" evidence="3">
    <location>
        <position position="33"/>
    </location>
</feature>
<feature type="modified residue" description="N6-acetyllysine; alternate" evidence="4">
    <location>
        <position position="35"/>
    </location>
</feature>
<feature type="modified residue" description="N6-succinyllysine; alternate" evidence="5">
    <location>
        <position position="35"/>
    </location>
</feature>
<feature type="modified residue" description="N6-acetyllysine" evidence="5">
    <location>
        <position position="42"/>
    </location>
</feature>
<feature type="non-terminal residue">
    <location>
        <position position="1"/>
    </location>
</feature>
<feature type="non-terminal residue">
    <location>
        <position position="99"/>
    </location>
</feature>
<gene>
    <name type="primary">COX4I1</name>
    <name type="synonym">COX4</name>
</gene>
<organism>
    <name type="scientific">Trachypithecus cristatus</name>
    <name type="common">Silvered leaf-monkey</name>
    <name type="synonym">Presbytis cristata</name>
    <dbReference type="NCBI Taxonomy" id="122765"/>
    <lineage>
        <taxon>Eukaryota</taxon>
        <taxon>Metazoa</taxon>
        <taxon>Chordata</taxon>
        <taxon>Craniata</taxon>
        <taxon>Vertebrata</taxon>
        <taxon>Euteleostomi</taxon>
        <taxon>Mammalia</taxon>
        <taxon>Eutheria</taxon>
        <taxon>Euarchontoglires</taxon>
        <taxon>Primates</taxon>
        <taxon>Haplorrhini</taxon>
        <taxon>Catarrhini</taxon>
        <taxon>Cercopithecidae</taxon>
        <taxon>Colobinae</taxon>
        <taxon>Trachypithecus</taxon>
    </lineage>
</organism>
<protein>
    <recommendedName>
        <fullName>Cytochrome c oxidase subunit 4 isoform 1, mitochondrial</fullName>
    </recommendedName>
    <alternativeName>
        <fullName>Cytochrome c oxidase polypeptide IV</fullName>
    </alternativeName>
    <alternativeName>
        <fullName>Cytochrome c oxidase subunit IV isoform 1</fullName>
        <shortName>COX IV-1</shortName>
    </alternativeName>
</protein>
<evidence type="ECO:0000250" key="1">
    <source>
        <dbReference type="UniProtKB" id="P00423"/>
    </source>
</evidence>
<evidence type="ECO:0000250" key="2">
    <source>
        <dbReference type="UniProtKB" id="P00424"/>
    </source>
</evidence>
<evidence type="ECO:0000250" key="3">
    <source>
        <dbReference type="UniProtKB" id="P10888"/>
    </source>
</evidence>
<evidence type="ECO:0000250" key="4">
    <source>
        <dbReference type="UniProtKB" id="P13073"/>
    </source>
</evidence>
<evidence type="ECO:0000250" key="5">
    <source>
        <dbReference type="UniProtKB" id="P19783"/>
    </source>
</evidence>
<evidence type="ECO:0000305" key="6"/>
<proteinExistence type="inferred from homology"/>
<name>COX41_TRACR</name>